<reference key="1">
    <citation type="journal article" date="2007" name="PLoS ONE">
        <title>The complete genome sequence and analysis of the Epsilonproteobacterium Arcobacter butzleri.</title>
        <authorList>
            <person name="Miller W.G."/>
            <person name="Parker C.T."/>
            <person name="Rubenfield M."/>
            <person name="Mendz G.L."/>
            <person name="Woesten M.M.S.M."/>
            <person name="Ussery D.W."/>
            <person name="Stolz J.F."/>
            <person name="Binnewies T.T."/>
            <person name="Hallin P.F."/>
            <person name="Wang G."/>
            <person name="Malek J.A."/>
            <person name="Rogosin A."/>
            <person name="Stanker L.H."/>
            <person name="Mandrell R.E."/>
        </authorList>
    </citation>
    <scope>NUCLEOTIDE SEQUENCE [LARGE SCALE GENOMIC DNA]</scope>
    <source>
        <strain>RM4018</strain>
    </source>
</reference>
<proteinExistence type="inferred from homology"/>
<accession>A8ERE4</accession>
<evidence type="ECO:0000255" key="1">
    <source>
        <dbReference type="HAMAP-Rule" id="MF_00270"/>
    </source>
</evidence>
<evidence type="ECO:0000305" key="2"/>
<gene>
    <name evidence="1" type="primary">rpsR</name>
    <name type="ordered locus">Abu_0243</name>
</gene>
<comment type="function">
    <text evidence="1">Binds as a heterodimer with protein bS6 to the central domain of the 16S rRNA, where it helps stabilize the platform of the 30S subunit.</text>
</comment>
<comment type="subunit">
    <text evidence="1">Part of the 30S ribosomal subunit. Forms a tight heterodimer with protein bS6.</text>
</comment>
<comment type="similarity">
    <text evidence="1">Belongs to the bacterial ribosomal protein bS18 family.</text>
</comment>
<feature type="chain" id="PRO_1000059135" description="Small ribosomal subunit protein bS18">
    <location>
        <begin position="1"/>
        <end position="88"/>
    </location>
</feature>
<sequence length="88" mass="10421">MAERRKYGKKYCKYTEMKVDFIDYKNTELLKLSMSERGKIMPRRLTGNSKNAQEMVEKAIKRARHMALVPYIVDTKNITDSAYARSFY</sequence>
<dbReference type="EMBL" id="CP000361">
    <property type="protein sequence ID" value="ABV66518.1"/>
    <property type="molecule type" value="Genomic_DNA"/>
</dbReference>
<dbReference type="RefSeq" id="WP_004510297.1">
    <property type="nucleotide sequence ID" value="NC_009850.1"/>
</dbReference>
<dbReference type="SMR" id="A8ERE4"/>
<dbReference type="STRING" id="367737.Abu_0243"/>
<dbReference type="GeneID" id="24304552"/>
<dbReference type="KEGG" id="abu:Abu_0243"/>
<dbReference type="eggNOG" id="COG0238">
    <property type="taxonomic scope" value="Bacteria"/>
</dbReference>
<dbReference type="HOGENOM" id="CLU_148710_2_2_7"/>
<dbReference type="Proteomes" id="UP000001136">
    <property type="component" value="Chromosome"/>
</dbReference>
<dbReference type="GO" id="GO:0022627">
    <property type="term" value="C:cytosolic small ribosomal subunit"/>
    <property type="evidence" value="ECO:0007669"/>
    <property type="project" value="TreeGrafter"/>
</dbReference>
<dbReference type="GO" id="GO:0070181">
    <property type="term" value="F:small ribosomal subunit rRNA binding"/>
    <property type="evidence" value="ECO:0007669"/>
    <property type="project" value="TreeGrafter"/>
</dbReference>
<dbReference type="GO" id="GO:0003735">
    <property type="term" value="F:structural constituent of ribosome"/>
    <property type="evidence" value="ECO:0007669"/>
    <property type="project" value="InterPro"/>
</dbReference>
<dbReference type="GO" id="GO:0006412">
    <property type="term" value="P:translation"/>
    <property type="evidence" value="ECO:0007669"/>
    <property type="project" value="UniProtKB-UniRule"/>
</dbReference>
<dbReference type="Gene3D" id="4.10.640.10">
    <property type="entry name" value="Ribosomal protein S18"/>
    <property type="match status" value="1"/>
</dbReference>
<dbReference type="HAMAP" id="MF_00270">
    <property type="entry name" value="Ribosomal_bS18"/>
    <property type="match status" value="1"/>
</dbReference>
<dbReference type="InterPro" id="IPR001648">
    <property type="entry name" value="Ribosomal_bS18"/>
</dbReference>
<dbReference type="InterPro" id="IPR018275">
    <property type="entry name" value="Ribosomal_bS18_CS"/>
</dbReference>
<dbReference type="InterPro" id="IPR036870">
    <property type="entry name" value="Ribosomal_bS18_sf"/>
</dbReference>
<dbReference type="NCBIfam" id="TIGR00165">
    <property type="entry name" value="S18"/>
    <property type="match status" value="1"/>
</dbReference>
<dbReference type="PANTHER" id="PTHR13479">
    <property type="entry name" value="30S RIBOSOMAL PROTEIN S18"/>
    <property type="match status" value="1"/>
</dbReference>
<dbReference type="PANTHER" id="PTHR13479:SF40">
    <property type="entry name" value="SMALL RIBOSOMAL SUBUNIT PROTEIN BS18M"/>
    <property type="match status" value="1"/>
</dbReference>
<dbReference type="Pfam" id="PF01084">
    <property type="entry name" value="Ribosomal_S18"/>
    <property type="match status" value="1"/>
</dbReference>
<dbReference type="PRINTS" id="PR00974">
    <property type="entry name" value="RIBOSOMALS18"/>
</dbReference>
<dbReference type="SUPFAM" id="SSF46911">
    <property type="entry name" value="Ribosomal protein S18"/>
    <property type="match status" value="1"/>
</dbReference>
<dbReference type="PROSITE" id="PS00057">
    <property type="entry name" value="RIBOSOMAL_S18"/>
    <property type="match status" value="1"/>
</dbReference>
<organism>
    <name type="scientific">Aliarcobacter butzleri (strain RM4018)</name>
    <name type="common">Arcobacter butzleri</name>
    <dbReference type="NCBI Taxonomy" id="367737"/>
    <lineage>
        <taxon>Bacteria</taxon>
        <taxon>Pseudomonadati</taxon>
        <taxon>Campylobacterota</taxon>
        <taxon>Epsilonproteobacteria</taxon>
        <taxon>Campylobacterales</taxon>
        <taxon>Arcobacteraceae</taxon>
        <taxon>Aliarcobacter</taxon>
    </lineage>
</organism>
<keyword id="KW-1185">Reference proteome</keyword>
<keyword id="KW-0687">Ribonucleoprotein</keyword>
<keyword id="KW-0689">Ribosomal protein</keyword>
<keyword id="KW-0694">RNA-binding</keyword>
<keyword id="KW-0699">rRNA-binding</keyword>
<name>RS18_ALIB4</name>
<protein>
    <recommendedName>
        <fullName evidence="1">Small ribosomal subunit protein bS18</fullName>
    </recommendedName>
    <alternativeName>
        <fullName evidence="2">30S ribosomal protein S18</fullName>
    </alternativeName>
</protein>